<reference key="1">
    <citation type="journal article" date="2002" name="J. Bacteriol.">
        <title>Whole-genome comparison of Mycobacterium tuberculosis clinical and laboratory strains.</title>
        <authorList>
            <person name="Fleischmann R.D."/>
            <person name="Alland D."/>
            <person name="Eisen J.A."/>
            <person name="Carpenter L."/>
            <person name="White O."/>
            <person name="Peterson J.D."/>
            <person name="DeBoy R.T."/>
            <person name="Dodson R.J."/>
            <person name="Gwinn M.L."/>
            <person name="Haft D.H."/>
            <person name="Hickey E.K."/>
            <person name="Kolonay J.F."/>
            <person name="Nelson W.C."/>
            <person name="Umayam L.A."/>
            <person name="Ermolaeva M.D."/>
            <person name="Salzberg S.L."/>
            <person name="Delcher A."/>
            <person name="Utterback T.R."/>
            <person name="Weidman J.F."/>
            <person name="Khouri H.M."/>
            <person name="Gill J."/>
            <person name="Mikula A."/>
            <person name="Bishai W."/>
            <person name="Jacobs W.R. Jr."/>
            <person name="Venter J.C."/>
            <person name="Fraser C.M."/>
        </authorList>
    </citation>
    <scope>NUCLEOTIDE SEQUENCE [LARGE SCALE GENOMIC DNA]</scope>
    <source>
        <strain>CDC 1551 / Oshkosh</strain>
    </source>
</reference>
<protein>
    <recommendedName>
        <fullName evidence="2">Large ribosomal subunit protein uL10</fullName>
    </recommendedName>
    <alternativeName>
        <fullName>50S ribosomal protein L10</fullName>
    </alternativeName>
</protein>
<comment type="function">
    <text evidence="1">Forms part of the ribosomal stalk, playing a central role in the interaction of the ribosome with GTP-bound translation factors.</text>
</comment>
<comment type="subunit">
    <text evidence="1">Part of the ribosomal stalk of the 50S ribosomal subunit. The N-terminus interacts with L11 and the large rRNA to form the base of the stalk. The C-terminus forms an elongated spine to which L12 dimers bind in a sequential fashion forming a multimeric L10(L12)X complex (By similarity).</text>
</comment>
<comment type="similarity">
    <text evidence="2">Belongs to the universal ribosomal protein uL10 family.</text>
</comment>
<dbReference type="EMBL" id="AE000516">
    <property type="protein sequence ID" value="AAK44905.1"/>
    <property type="molecule type" value="Genomic_DNA"/>
</dbReference>
<dbReference type="PIR" id="H70614">
    <property type="entry name" value="H70614"/>
</dbReference>
<dbReference type="RefSeq" id="WP_003403341.1">
    <property type="nucleotide sequence ID" value="NZ_KK341227.1"/>
</dbReference>
<dbReference type="SMR" id="P9WHE6"/>
<dbReference type="GeneID" id="45424611"/>
<dbReference type="KEGG" id="mtc:MT0680"/>
<dbReference type="PATRIC" id="fig|83331.31.peg.723"/>
<dbReference type="HOGENOM" id="CLU_092227_1_0_11"/>
<dbReference type="Proteomes" id="UP000001020">
    <property type="component" value="Chromosome"/>
</dbReference>
<dbReference type="GO" id="GO:0015934">
    <property type="term" value="C:large ribosomal subunit"/>
    <property type="evidence" value="ECO:0007669"/>
    <property type="project" value="InterPro"/>
</dbReference>
<dbReference type="GO" id="GO:0070180">
    <property type="term" value="F:large ribosomal subunit rRNA binding"/>
    <property type="evidence" value="ECO:0007669"/>
    <property type="project" value="UniProtKB-UniRule"/>
</dbReference>
<dbReference type="GO" id="GO:0003735">
    <property type="term" value="F:structural constituent of ribosome"/>
    <property type="evidence" value="ECO:0007669"/>
    <property type="project" value="InterPro"/>
</dbReference>
<dbReference type="GO" id="GO:0006412">
    <property type="term" value="P:translation"/>
    <property type="evidence" value="ECO:0007669"/>
    <property type="project" value="UniProtKB-UniRule"/>
</dbReference>
<dbReference type="CDD" id="cd05797">
    <property type="entry name" value="Ribosomal_L10"/>
    <property type="match status" value="1"/>
</dbReference>
<dbReference type="FunFam" id="3.30.70.1730:FF:000003">
    <property type="entry name" value="50S ribosomal protein L10"/>
    <property type="match status" value="1"/>
</dbReference>
<dbReference type="Gene3D" id="3.30.70.1730">
    <property type="match status" value="1"/>
</dbReference>
<dbReference type="Gene3D" id="6.10.250.290">
    <property type="match status" value="1"/>
</dbReference>
<dbReference type="HAMAP" id="MF_00362">
    <property type="entry name" value="Ribosomal_uL10"/>
    <property type="match status" value="1"/>
</dbReference>
<dbReference type="InterPro" id="IPR001790">
    <property type="entry name" value="Ribosomal_uL10"/>
</dbReference>
<dbReference type="InterPro" id="IPR043141">
    <property type="entry name" value="Ribosomal_uL10-like_sf"/>
</dbReference>
<dbReference type="InterPro" id="IPR022973">
    <property type="entry name" value="Ribosomal_uL10_bac"/>
</dbReference>
<dbReference type="InterPro" id="IPR047865">
    <property type="entry name" value="Ribosomal_uL10_bac_type"/>
</dbReference>
<dbReference type="InterPro" id="IPR002363">
    <property type="entry name" value="Ribosomal_uL10_CS_bac"/>
</dbReference>
<dbReference type="NCBIfam" id="NF000955">
    <property type="entry name" value="PRK00099.1-1"/>
    <property type="match status" value="1"/>
</dbReference>
<dbReference type="PANTHER" id="PTHR11560">
    <property type="entry name" value="39S RIBOSOMAL PROTEIN L10, MITOCHONDRIAL"/>
    <property type="match status" value="1"/>
</dbReference>
<dbReference type="Pfam" id="PF00466">
    <property type="entry name" value="Ribosomal_L10"/>
    <property type="match status" value="1"/>
</dbReference>
<dbReference type="SUPFAM" id="SSF160369">
    <property type="entry name" value="Ribosomal protein L10-like"/>
    <property type="match status" value="1"/>
</dbReference>
<dbReference type="PROSITE" id="PS01109">
    <property type="entry name" value="RIBOSOMAL_L10"/>
    <property type="match status" value="1"/>
</dbReference>
<gene>
    <name type="primary">rplJ</name>
    <name type="ordered locus">MT0680</name>
</gene>
<keyword id="KW-1185">Reference proteome</keyword>
<keyword id="KW-0687">Ribonucleoprotein</keyword>
<keyword id="KW-0689">Ribosomal protein</keyword>
<keyword id="KW-0694">RNA-binding</keyword>
<keyword id="KW-0699">rRNA-binding</keyword>
<proteinExistence type="inferred from homology"/>
<sequence length="178" mass="18478">MARADKATAVADIAAQFKESTATLITEYRGLTVANLAELRRSLTGSATYAVAKNTLIKRAASEAGIEGLDELFVGPTAIAFVTGEPVDAAKAIKTFAKEHKALVIKGGYMDGHPLTVAEVERIADLESREVLLAKLAGAMKGNLAKAAGLFNAPASQLARLAAALQEKKACPGPDSAE</sequence>
<evidence type="ECO:0000250" key="1"/>
<evidence type="ECO:0000305" key="2"/>
<name>RL10_MYCTO</name>
<accession>P9WHE6</accession>
<accession>L0T634</accession>
<accession>P66044</accession>
<accession>P96940</accession>
<organism>
    <name type="scientific">Mycobacterium tuberculosis (strain CDC 1551 / Oshkosh)</name>
    <dbReference type="NCBI Taxonomy" id="83331"/>
    <lineage>
        <taxon>Bacteria</taxon>
        <taxon>Bacillati</taxon>
        <taxon>Actinomycetota</taxon>
        <taxon>Actinomycetes</taxon>
        <taxon>Mycobacteriales</taxon>
        <taxon>Mycobacteriaceae</taxon>
        <taxon>Mycobacterium</taxon>
        <taxon>Mycobacterium tuberculosis complex</taxon>
    </lineage>
</organism>
<feature type="chain" id="PRO_0000428200" description="Large ribosomal subunit protein uL10">
    <location>
        <begin position="1"/>
        <end position="178"/>
    </location>
</feature>